<keyword id="KW-0067">ATP-binding</keyword>
<keyword id="KW-0319">Glycerol metabolism</keyword>
<keyword id="KW-0418">Kinase</keyword>
<keyword id="KW-0547">Nucleotide-binding</keyword>
<keyword id="KW-0597">Phosphoprotein</keyword>
<keyword id="KW-0808">Transferase</keyword>
<feature type="chain" id="PRO_1000020795" description="Glycerol kinase">
    <location>
        <begin position="1"/>
        <end position="499"/>
    </location>
</feature>
<feature type="binding site" evidence="1">
    <location>
        <position position="12"/>
    </location>
    <ligand>
        <name>ADP</name>
        <dbReference type="ChEBI" id="CHEBI:456216"/>
    </ligand>
</feature>
<feature type="binding site" evidence="1">
    <location>
        <position position="12"/>
    </location>
    <ligand>
        <name>ATP</name>
        <dbReference type="ChEBI" id="CHEBI:30616"/>
    </ligand>
</feature>
<feature type="binding site" evidence="1">
    <location>
        <position position="12"/>
    </location>
    <ligand>
        <name>sn-glycerol 3-phosphate</name>
        <dbReference type="ChEBI" id="CHEBI:57597"/>
    </ligand>
</feature>
<feature type="binding site" evidence="1">
    <location>
        <position position="13"/>
    </location>
    <ligand>
        <name>ATP</name>
        <dbReference type="ChEBI" id="CHEBI:30616"/>
    </ligand>
</feature>
<feature type="binding site" evidence="1">
    <location>
        <position position="14"/>
    </location>
    <ligand>
        <name>ATP</name>
        <dbReference type="ChEBI" id="CHEBI:30616"/>
    </ligand>
</feature>
<feature type="binding site" evidence="1">
    <location>
        <position position="16"/>
    </location>
    <ligand>
        <name>ADP</name>
        <dbReference type="ChEBI" id="CHEBI:456216"/>
    </ligand>
</feature>
<feature type="binding site" evidence="1">
    <location>
        <position position="82"/>
    </location>
    <ligand>
        <name>glycerol</name>
        <dbReference type="ChEBI" id="CHEBI:17754"/>
    </ligand>
</feature>
<feature type="binding site" evidence="1">
    <location>
        <position position="82"/>
    </location>
    <ligand>
        <name>sn-glycerol 3-phosphate</name>
        <dbReference type="ChEBI" id="CHEBI:57597"/>
    </ligand>
</feature>
<feature type="binding site" evidence="1">
    <location>
        <position position="83"/>
    </location>
    <ligand>
        <name>glycerol</name>
        <dbReference type="ChEBI" id="CHEBI:17754"/>
    </ligand>
</feature>
<feature type="binding site" evidence="1">
    <location>
        <position position="83"/>
    </location>
    <ligand>
        <name>sn-glycerol 3-phosphate</name>
        <dbReference type="ChEBI" id="CHEBI:57597"/>
    </ligand>
</feature>
<feature type="binding site" evidence="1">
    <location>
        <position position="134"/>
    </location>
    <ligand>
        <name>glycerol</name>
        <dbReference type="ChEBI" id="CHEBI:17754"/>
    </ligand>
</feature>
<feature type="binding site" evidence="1">
    <location>
        <position position="134"/>
    </location>
    <ligand>
        <name>sn-glycerol 3-phosphate</name>
        <dbReference type="ChEBI" id="CHEBI:57597"/>
    </ligand>
</feature>
<feature type="binding site" evidence="1">
    <location>
        <position position="244"/>
    </location>
    <ligand>
        <name>glycerol</name>
        <dbReference type="ChEBI" id="CHEBI:17754"/>
    </ligand>
</feature>
<feature type="binding site" evidence="1">
    <location>
        <position position="244"/>
    </location>
    <ligand>
        <name>sn-glycerol 3-phosphate</name>
        <dbReference type="ChEBI" id="CHEBI:57597"/>
    </ligand>
</feature>
<feature type="binding site" evidence="1">
    <location>
        <position position="245"/>
    </location>
    <ligand>
        <name>glycerol</name>
        <dbReference type="ChEBI" id="CHEBI:17754"/>
    </ligand>
</feature>
<feature type="binding site" evidence="1">
    <location>
        <position position="266"/>
    </location>
    <ligand>
        <name>ADP</name>
        <dbReference type="ChEBI" id="CHEBI:456216"/>
    </ligand>
</feature>
<feature type="binding site" evidence="1">
    <location>
        <position position="266"/>
    </location>
    <ligand>
        <name>ATP</name>
        <dbReference type="ChEBI" id="CHEBI:30616"/>
    </ligand>
</feature>
<feature type="binding site" evidence="1">
    <location>
        <position position="309"/>
    </location>
    <ligand>
        <name>ADP</name>
        <dbReference type="ChEBI" id="CHEBI:456216"/>
    </ligand>
</feature>
<feature type="binding site" evidence="1">
    <location>
        <position position="309"/>
    </location>
    <ligand>
        <name>ATP</name>
        <dbReference type="ChEBI" id="CHEBI:30616"/>
    </ligand>
</feature>
<feature type="binding site" evidence="1">
    <location>
        <position position="313"/>
    </location>
    <ligand>
        <name>ATP</name>
        <dbReference type="ChEBI" id="CHEBI:30616"/>
    </ligand>
</feature>
<feature type="binding site" evidence="1">
    <location>
        <position position="410"/>
    </location>
    <ligand>
        <name>ADP</name>
        <dbReference type="ChEBI" id="CHEBI:456216"/>
    </ligand>
</feature>
<feature type="binding site" evidence="1">
    <location>
        <position position="410"/>
    </location>
    <ligand>
        <name>ATP</name>
        <dbReference type="ChEBI" id="CHEBI:30616"/>
    </ligand>
</feature>
<feature type="binding site" evidence="1">
    <location>
        <position position="414"/>
    </location>
    <ligand>
        <name>ADP</name>
        <dbReference type="ChEBI" id="CHEBI:456216"/>
    </ligand>
</feature>
<feature type="modified residue" description="Phosphohistidine; by HPr" evidence="1">
    <location>
        <position position="230"/>
    </location>
</feature>
<sequence length="499" mass="56195">MEKYIMSIDQGTTSSRAILFDKEGDIKGVAQREFKQYFPKSGWVEHDANEIWTSVLAVMTEVLNENEINADQIEGIGITNQRETTVIWDKNTGRPIYHAIVWQSRQTQSICHELKEQGHEETFRNKTGLLLDPYFAGTKVKWILDNVDGAREKAENGDLLFGTIDTWLVWKLSGGEAHITDYSNASRTLMYNIYDLQWDDELLDLLNVPKQLLPEVKESSEIYAHTKDYHFFGQEVPISGIAGDQQAALFGQACFERGDVKNTYGTGGFMLMNTGEEPVKSESGLLTTIAYGLDGKVNYALEGSIFVSGSAIQWLRDGLRIINSAPQSENYATRVDSTDNVYFVPAFVGLGTPYWDSEARGAIFGLSRGTEKEHFIRATLESLCYQTRDVMEAMSKDSKIEVNNLRVDGGAVKNNFIMQFQADIVNTAVERPEIQETTALGAAYLAGLAVGFWDSKDEIANRWQLETEFTPQMSEEDRTKLYKGWKKAVEATQVFKLED</sequence>
<gene>
    <name evidence="1" type="primary">glpK</name>
    <name type="ordered locus">SH1609</name>
</gene>
<reference key="1">
    <citation type="journal article" date="2005" name="J. Bacteriol.">
        <title>Whole-genome sequencing of Staphylococcus haemolyticus uncovers the extreme plasticity of its genome and the evolution of human-colonizing staphylococcal species.</title>
        <authorList>
            <person name="Takeuchi F."/>
            <person name="Watanabe S."/>
            <person name="Baba T."/>
            <person name="Yuzawa H."/>
            <person name="Ito T."/>
            <person name="Morimoto Y."/>
            <person name="Kuroda M."/>
            <person name="Cui L."/>
            <person name="Takahashi M."/>
            <person name="Ankai A."/>
            <person name="Baba S."/>
            <person name="Fukui S."/>
            <person name="Lee J.C."/>
            <person name="Hiramatsu K."/>
        </authorList>
    </citation>
    <scope>NUCLEOTIDE SEQUENCE [LARGE SCALE GENOMIC DNA]</scope>
    <source>
        <strain>JCSC1435</strain>
    </source>
</reference>
<evidence type="ECO:0000255" key="1">
    <source>
        <dbReference type="HAMAP-Rule" id="MF_00186"/>
    </source>
</evidence>
<dbReference type="EC" id="2.7.1.30" evidence="1"/>
<dbReference type="EMBL" id="AP006716">
    <property type="protein sequence ID" value="BAE04918.1"/>
    <property type="molecule type" value="Genomic_DNA"/>
</dbReference>
<dbReference type="RefSeq" id="WP_011275899.1">
    <property type="nucleotide sequence ID" value="NC_007168.1"/>
</dbReference>
<dbReference type="SMR" id="Q4L607"/>
<dbReference type="KEGG" id="sha:SH1609"/>
<dbReference type="eggNOG" id="COG0554">
    <property type="taxonomic scope" value="Bacteria"/>
</dbReference>
<dbReference type="HOGENOM" id="CLU_009281_2_3_9"/>
<dbReference type="OrthoDB" id="9805576at2"/>
<dbReference type="UniPathway" id="UPA00618">
    <property type="reaction ID" value="UER00672"/>
</dbReference>
<dbReference type="Proteomes" id="UP000000543">
    <property type="component" value="Chromosome"/>
</dbReference>
<dbReference type="GO" id="GO:0005829">
    <property type="term" value="C:cytosol"/>
    <property type="evidence" value="ECO:0007669"/>
    <property type="project" value="TreeGrafter"/>
</dbReference>
<dbReference type="GO" id="GO:0005524">
    <property type="term" value="F:ATP binding"/>
    <property type="evidence" value="ECO:0007669"/>
    <property type="project" value="UniProtKB-UniRule"/>
</dbReference>
<dbReference type="GO" id="GO:0004370">
    <property type="term" value="F:glycerol kinase activity"/>
    <property type="evidence" value="ECO:0000250"/>
    <property type="project" value="UniProtKB"/>
</dbReference>
<dbReference type="GO" id="GO:0019563">
    <property type="term" value="P:glycerol catabolic process"/>
    <property type="evidence" value="ECO:0007669"/>
    <property type="project" value="UniProtKB-UniRule"/>
</dbReference>
<dbReference type="GO" id="GO:0006071">
    <property type="term" value="P:glycerol metabolic process"/>
    <property type="evidence" value="ECO:0000250"/>
    <property type="project" value="UniProtKB"/>
</dbReference>
<dbReference type="GO" id="GO:0006072">
    <property type="term" value="P:glycerol-3-phosphate metabolic process"/>
    <property type="evidence" value="ECO:0007669"/>
    <property type="project" value="InterPro"/>
</dbReference>
<dbReference type="CDD" id="cd07786">
    <property type="entry name" value="FGGY_EcGK_like"/>
    <property type="match status" value="1"/>
</dbReference>
<dbReference type="FunFam" id="3.30.420.40:FF:000007">
    <property type="entry name" value="Glycerol kinase"/>
    <property type="match status" value="1"/>
</dbReference>
<dbReference type="FunFam" id="3.30.420.40:FF:000008">
    <property type="entry name" value="Glycerol kinase"/>
    <property type="match status" value="1"/>
</dbReference>
<dbReference type="Gene3D" id="3.30.420.40">
    <property type="match status" value="2"/>
</dbReference>
<dbReference type="HAMAP" id="MF_00186">
    <property type="entry name" value="Glycerol_kin"/>
    <property type="match status" value="1"/>
</dbReference>
<dbReference type="InterPro" id="IPR043129">
    <property type="entry name" value="ATPase_NBD"/>
</dbReference>
<dbReference type="InterPro" id="IPR000577">
    <property type="entry name" value="Carb_kinase_FGGY"/>
</dbReference>
<dbReference type="InterPro" id="IPR018483">
    <property type="entry name" value="Carb_kinase_FGGY_CS"/>
</dbReference>
<dbReference type="InterPro" id="IPR018485">
    <property type="entry name" value="FGGY_C"/>
</dbReference>
<dbReference type="InterPro" id="IPR018484">
    <property type="entry name" value="FGGY_N"/>
</dbReference>
<dbReference type="InterPro" id="IPR005999">
    <property type="entry name" value="Glycerol_kin"/>
</dbReference>
<dbReference type="NCBIfam" id="TIGR01311">
    <property type="entry name" value="glycerol_kin"/>
    <property type="match status" value="1"/>
</dbReference>
<dbReference type="NCBIfam" id="NF000756">
    <property type="entry name" value="PRK00047.1"/>
    <property type="match status" value="1"/>
</dbReference>
<dbReference type="PANTHER" id="PTHR10196:SF69">
    <property type="entry name" value="GLYCEROL KINASE"/>
    <property type="match status" value="1"/>
</dbReference>
<dbReference type="PANTHER" id="PTHR10196">
    <property type="entry name" value="SUGAR KINASE"/>
    <property type="match status" value="1"/>
</dbReference>
<dbReference type="Pfam" id="PF02782">
    <property type="entry name" value="FGGY_C"/>
    <property type="match status" value="1"/>
</dbReference>
<dbReference type="Pfam" id="PF00370">
    <property type="entry name" value="FGGY_N"/>
    <property type="match status" value="1"/>
</dbReference>
<dbReference type="PIRSF" id="PIRSF000538">
    <property type="entry name" value="GlpK"/>
    <property type="match status" value="1"/>
</dbReference>
<dbReference type="SUPFAM" id="SSF53067">
    <property type="entry name" value="Actin-like ATPase domain"/>
    <property type="match status" value="2"/>
</dbReference>
<dbReference type="PROSITE" id="PS00445">
    <property type="entry name" value="FGGY_KINASES_2"/>
    <property type="match status" value="1"/>
</dbReference>
<name>GLPK_STAHJ</name>
<proteinExistence type="inferred from homology"/>
<comment type="function">
    <text evidence="1">Key enzyme in the regulation of glycerol uptake and metabolism. Catalyzes the phosphorylation of glycerol to yield sn-glycerol 3-phosphate.</text>
</comment>
<comment type="catalytic activity">
    <reaction evidence="1">
        <text>glycerol + ATP = sn-glycerol 3-phosphate + ADP + H(+)</text>
        <dbReference type="Rhea" id="RHEA:21644"/>
        <dbReference type="ChEBI" id="CHEBI:15378"/>
        <dbReference type="ChEBI" id="CHEBI:17754"/>
        <dbReference type="ChEBI" id="CHEBI:30616"/>
        <dbReference type="ChEBI" id="CHEBI:57597"/>
        <dbReference type="ChEBI" id="CHEBI:456216"/>
        <dbReference type="EC" id="2.7.1.30"/>
    </reaction>
</comment>
<comment type="activity regulation">
    <text evidence="1">Activated by phosphorylation and inhibited by fructose 1,6-bisphosphate (FBP).</text>
</comment>
<comment type="pathway">
    <text evidence="1">Polyol metabolism; glycerol degradation via glycerol kinase pathway; sn-glycerol 3-phosphate from glycerol: step 1/1.</text>
</comment>
<comment type="subunit">
    <text evidence="1">Homotetramer and homodimer (in equilibrium).</text>
</comment>
<comment type="PTM">
    <text evidence="1">The phosphoenolpyruvate-dependent sugar phosphotransferase system (PTS), including enzyme I, and histidine-containing protein (HPr) are required for the phosphorylation, which leads to the activation of the enzyme.</text>
</comment>
<comment type="similarity">
    <text evidence="1">Belongs to the FGGY kinase family.</text>
</comment>
<organism>
    <name type="scientific">Staphylococcus haemolyticus (strain JCSC1435)</name>
    <dbReference type="NCBI Taxonomy" id="279808"/>
    <lineage>
        <taxon>Bacteria</taxon>
        <taxon>Bacillati</taxon>
        <taxon>Bacillota</taxon>
        <taxon>Bacilli</taxon>
        <taxon>Bacillales</taxon>
        <taxon>Staphylococcaceae</taxon>
        <taxon>Staphylococcus</taxon>
    </lineage>
</organism>
<accession>Q4L607</accession>
<protein>
    <recommendedName>
        <fullName evidence="1">Glycerol kinase</fullName>
        <ecNumber evidence="1">2.7.1.30</ecNumber>
    </recommendedName>
    <alternativeName>
        <fullName evidence="1">ATP:glycerol 3-phosphotransferase</fullName>
    </alternativeName>
    <alternativeName>
        <fullName evidence="1">Glycerokinase</fullName>
        <shortName evidence="1">GK</shortName>
    </alternativeName>
</protein>